<gene>
    <name evidence="1" type="primary">upp</name>
    <name type="ordered locus">CKR_3267</name>
</gene>
<keyword id="KW-0021">Allosteric enzyme</keyword>
<keyword id="KW-0328">Glycosyltransferase</keyword>
<keyword id="KW-0342">GTP-binding</keyword>
<keyword id="KW-0460">Magnesium</keyword>
<keyword id="KW-0547">Nucleotide-binding</keyword>
<keyword id="KW-0808">Transferase</keyword>
<comment type="function">
    <text evidence="1">Catalyzes the conversion of uracil and 5-phospho-alpha-D-ribose 1-diphosphate (PRPP) to UMP and diphosphate.</text>
</comment>
<comment type="catalytic activity">
    <reaction evidence="1">
        <text>UMP + diphosphate = 5-phospho-alpha-D-ribose 1-diphosphate + uracil</text>
        <dbReference type="Rhea" id="RHEA:13017"/>
        <dbReference type="ChEBI" id="CHEBI:17568"/>
        <dbReference type="ChEBI" id="CHEBI:33019"/>
        <dbReference type="ChEBI" id="CHEBI:57865"/>
        <dbReference type="ChEBI" id="CHEBI:58017"/>
        <dbReference type="EC" id="2.4.2.9"/>
    </reaction>
</comment>
<comment type="cofactor">
    <cofactor evidence="1">
        <name>Mg(2+)</name>
        <dbReference type="ChEBI" id="CHEBI:18420"/>
    </cofactor>
    <text evidence="1">Binds 1 Mg(2+) ion per subunit. The magnesium is bound as Mg-PRPP.</text>
</comment>
<comment type="activity regulation">
    <text evidence="1">Allosterically activated by GTP.</text>
</comment>
<comment type="pathway">
    <text evidence="1">Pyrimidine metabolism; UMP biosynthesis via salvage pathway; UMP from uracil: step 1/1.</text>
</comment>
<comment type="similarity">
    <text evidence="1">Belongs to the UPRTase family.</text>
</comment>
<reference key="1">
    <citation type="submission" date="2005-09" db="EMBL/GenBank/DDBJ databases">
        <title>Complete genome sequence of Clostridium kluyveri and comparative genomics of Clostridia species.</title>
        <authorList>
            <person name="Inui M."/>
            <person name="Nonaka H."/>
            <person name="Shinoda Y."/>
            <person name="Ikenaga Y."/>
            <person name="Abe M."/>
            <person name="Naito K."/>
            <person name="Vertes A.A."/>
            <person name="Yukawa H."/>
        </authorList>
    </citation>
    <scope>NUCLEOTIDE SEQUENCE [LARGE SCALE GENOMIC DNA]</scope>
    <source>
        <strain>NBRC 12016</strain>
    </source>
</reference>
<name>UPP_CLOK1</name>
<evidence type="ECO:0000255" key="1">
    <source>
        <dbReference type="HAMAP-Rule" id="MF_01218"/>
    </source>
</evidence>
<feature type="chain" id="PRO_1000164818" description="Uracil phosphoribosyltransferase">
    <location>
        <begin position="1"/>
        <end position="209"/>
    </location>
</feature>
<feature type="binding site" evidence="1">
    <location>
        <position position="79"/>
    </location>
    <ligand>
        <name>5-phospho-alpha-D-ribose 1-diphosphate</name>
        <dbReference type="ChEBI" id="CHEBI:58017"/>
    </ligand>
</feature>
<feature type="binding site" evidence="1">
    <location>
        <position position="104"/>
    </location>
    <ligand>
        <name>5-phospho-alpha-D-ribose 1-diphosphate</name>
        <dbReference type="ChEBI" id="CHEBI:58017"/>
    </ligand>
</feature>
<feature type="binding site" evidence="1">
    <location>
        <begin position="131"/>
        <end position="139"/>
    </location>
    <ligand>
        <name>5-phospho-alpha-D-ribose 1-diphosphate</name>
        <dbReference type="ChEBI" id="CHEBI:58017"/>
    </ligand>
</feature>
<feature type="binding site" evidence="1">
    <location>
        <position position="194"/>
    </location>
    <ligand>
        <name>uracil</name>
        <dbReference type="ChEBI" id="CHEBI:17568"/>
    </ligand>
</feature>
<feature type="binding site" evidence="1">
    <location>
        <begin position="199"/>
        <end position="201"/>
    </location>
    <ligand>
        <name>uracil</name>
        <dbReference type="ChEBI" id="CHEBI:17568"/>
    </ligand>
</feature>
<feature type="binding site" evidence="1">
    <location>
        <position position="200"/>
    </location>
    <ligand>
        <name>5-phospho-alpha-D-ribose 1-diphosphate</name>
        <dbReference type="ChEBI" id="CHEBI:58017"/>
    </ligand>
</feature>
<proteinExistence type="inferred from homology"/>
<protein>
    <recommendedName>
        <fullName evidence="1">Uracil phosphoribosyltransferase</fullName>
        <ecNumber evidence="1">2.4.2.9</ecNumber>
    </recommendedName>
    <alternativeName>
        <fullName evidence="1">UMP pyrophosphorylase</fullName>
    </alternativeName>
    <alternativeName>
        <fullName evidence="1">UPRTase</fullName>
    </alternativeName>
</protein>
<dbReference type="EC" id="2.4.2.9" evidence="1"/>
<dbReference type="EMBL" id="AP009049">
    <property type="protein sequence ID" value="BAH08318.1"/>
    <property type="molecule type" value="Genomic_DNA"/>
</dbReference>
<dbReference type="RefSeq" id="WP_012104020.1">
    <property type="nucleotide sequence ID" value="NC_011837.1"/>
</dbReference>
<dbReference type="SMR" id="B9DX75"/>
<dbReference type="KEGG" id="ckr:CKR_3267"/>
<dbReference type="HOGENOM" id="CLU_067096_2_2_9"/>
<dbReference type="UniPathway" id="UPA00574">
    <property type="reaction ID" value="UER00636"/>
</dbReference>
<dbReference type="Proteomes" id="UP000007969">
    <property type="component" value="Chromosome"/>
</dbReference>
<dbReference type="GO" id="GO:0005525">
    <property type="term" value="F:GTP binding"/>
    <property type="evidence" value="ECO:0007669"/>
    <property type="project" value="UniProtKB-KW"/>
</dbReference>
<dbReference type="GO" id="GO:0000287">
    <property type="term" value="F:magnesium ion binding"/>
    <property type="evidence" value="ECO:0007669"/>
    <property type="project" value="UniProtKB-UniRule"/>
</dbReference>
<dbReference type="GO" id="GO:0004845">
    <property type="term" value="F:uracil phosphoribosyltransferase activity"/>
    <property type="evidence" value="ECO:0007669"/>
    <property type="project" value="UniProtKB-UniRule"/>
</dbReference>
<dbReference type="GO" id="GO:0044206">
    <property type="term" value="P:UMP salvage"/>
    <property type="evidence" value="ECO:0007669"/>
    <property type="project" value="UniProtKB-UniRule"/>
</dbReference>
<dbReference type="GO" id="GO:0006223">
    <property type="term" value="P:uracil salvage"/>
    <property type="evidence" value="ECO:0007669"/>
    <property type="project" value="InterPro"/>
</dbReference>
<dbReference type="CDD" id="cd06223">
    <property type="entry name" value="PRTases_typeI"/>
    <property type="match status" value="1"/>
</dbReference>
<dbReference type="FunFam" id="3.40.50.2020:FF:000003">
    <property type="entry name" value="Uracil phosphoribosyltransferase"/>
    <property type="match status" value="1"/>
</dbReference>
<dbReference type="Gene3D" id="3.40.50.2020">
    <property type="match status" value="1"/>
</dbReference>
<dbReference type="HAMAP" id="MF_01218_B">
    <property type="entry name" value="Upp_B"/>
    <property type="match status" value="1"/>
</dbReference>
<dbReference type="InterPro" id="IPR000836">
    <property type="entry name" value="PRibTrfase_dom"/>
</dbReference>
<dbReference type="InterPro" id="IPR029057">
    <property type="entry name" value="PRTase-like"/>
</dbReference>
<dbReference type="InterPro" id="IPR034332">
    <property type="entry name" value="Upp_B"/>
</dbReference>
<dbReference type="InterPro" id="IPR050054">
    <property type="entry name" value="UPRTase/APRTase"/>
</dbReference>
<dbReference type="InterPro" id="IPR005765">
    <property type="entry name" value="Ura_phspho_trans"/>
</dbReference>
<dbReference type="NCBIfam" id="NF001097">
    <property type="entry name" value="PRK00129.1"/>
    <property type="match status" value="1"/>
</dbReference>
<dbReference type="NCBIfam" id="TIGR01091">
    <property type="entry name" value="upp"/>
    <property type="match status" value="1"/>
</dbReference>
<dbReference type="PANTHER" id="PTHR32315">
    <property type="entry name" value="ADENINE PHOSPHORIBOSYLTRANSFERASE"/>
    <property type="match status" value="1"/>
</dbReference>
<dbReference type="PANTHER" id="PTHR32315:SF4">
    <property type="entry name" value="URACIL PHOSPHORIBOSYLTRANSFERASE, CHLOROPLASTIC"/>
    <property type="match status" value="1"/>
</dbReference>
<dbReference type="Pfam" id="PF14681">
    <property type="entry name" value="UPRTase"/>
    <property type="match status" value="1"/>
</dbReference>
<dbReference type="SUPFAM" id="SSF53271">
    <property type="entry name" value="PRTase-like"/>
    <property type="match status" value="1"/>
</dbReference>
<accession>B9DX75</accession>
<sequence>MSKVTQITHPLILHKLALIRDKRTGSKDFRELVEEVAMLMAYEVTRNLQTEEVEIETPICNTTCKMLSGKKVAVVPILRAGLGMVGGMLKLIPAAKVGHIGLYRDETTLKPVEYFCKLPQDIGEREVIVTDPMLATGGSAIDAITMLKQKGAKNIRLMCLIAAEDGIKSVTEAHPDVDIYTAAIDKELNKNGYIVPGLGDAGDRLYGTK</sequence>
<organism>
    <name type="scientific">Clostridium kluyveri (strain NBRC 12016)</name>
    <dbReference type="NCBI Taxonomy" id="583346"/>
    <lineage>
        <taxon>Bacteria</taxon>
        <taxon>Bacillati</taxon>
        <taxon>Bacillota</taxon>
        <taxon>Clostridia</taxon>
        <taxon>Eubacteriales</taxon>
        <taxon>Clostridiaceae</taxon>
        <taxon>Clostridium</taxon>
    </lineage>
</organism>